<name>CYB_MYOEV</name>
<proteinExistence type="inferred from homology"/>
<accession>Q5F4G9</accession>
<geneLocation type="mitochondrion"/>
<sequence length="379" mass="42785">MTNIRKSHPLMKIINSSFIDLPAPSNISSWWNFGSLLGICLALQILTGLFLAMHYTSDTATAFNSVTHICRDVNYGWVLRYMHANGASMFFICLYLHVGRGLYYGSYMYTETWNIGVILLFAVMATAFMGYVLPWGQMSFWGATVITNLLSAIPYIGTDLVEWIWGGFSVDKATLTRFFAFHFLLPFIIVAMVMVHLLFLHETGSNNPTGIPSNADMIPFHPYYTIKDILGLLLMITALLMLVLFSPDMLGDPDNYTPANPLNTPPHIKPEWYFLFAYAILRSIPNKLGGVLALVLSILILIIVPLLHTSKQRSMTFRPLSQCLFWLLAADLFTLTWIGGQPVEHPYVIIGQLASILYFSIIIILMPLTSXMENHLLKW</sequence>
<protein>
    <recommendedName>
        <fullName>Cytochrome b</fullName>
    </recommendedName>
    <alternativeName>
        <fullName>Complex III subunit 3</fullName>
    </alternativeName>
    <alternativeName>
        <fullName>Complex III subunit III</fullName>
    </alternativeName>
    <alternativeName>
        <fullName>Cytochrome b-c1 complex subunit 3</fullName>
    </alternativeName>
    <alternativeName>
        <fullName>Ubiquinol-cytochrome-c reductase complex cytochrome b subunit</fullName>
    </alternativeName>
</protein>
<gene>
    <name type="primary">MT-CYB</name>
    <name type="synonym">COB</name>
    <name type="synonym">CYTB</name>
    <name type="synonym">MTCYB</name>
</gene>
<keyword id="KW-0249">Electron transport</keyword>
<keyword id="KW-0349">Heme</keyword>
<keyword id="KW-0408">Iron</keyword>
<keyword id="KW-0472">Membrane</keyword>
<keyword id="KW-0479">Metal-binding</keyword>
<keyword id="KW-0496">Mitochondrion</keyword>
<keyword id="KW-0999">Mitochondrion inner membrane</keyword>
<keyword id="KW-0679">Respiratory chain</keyword>
<keyword id="KW-0812">Transmembrane</keyword>
<keyword id="KW-1133">Transmembrane helix</keyword>
<keyword id="KW-0813">Transport</keyword>
<keyword id="KW-0830">Ubiquinone</keyword>
<dbReference type="EMBL" id="AJ841949">
    <property type="protein sequence ID" value="CAH56542.1"/>
    <property type="molecule type" value="Genomic_DNA"/>
</dbReference>
<dbReference type="GO" id="GO:0005743">
    <property type="term" value="C:mitochondrial inner membrane"/>
    <property type="evidence" value="ECO:0007669"/>
    <property type="project" value="UniProtKB-SubCell"/>
</dbReference>
<dbReference type="GO" id="GO:0045275">
    <property type="term" value="C:respiratory chain complex III"/>
    <property type="evidence" value="ECO:0007669"/>
    <property type="project" value="InterPro"/>
</dbReference>
<dbReference type="GO" id="GO:0046872">
    <property type="term" value="F:metal ion binding"/>
    <property type="evidence" value="ECO:0007669"/>
    <property type="project" value="UniProtKB-KW"/>
</dbReference>
<dbReference type="GO" id="GO:0008121">
    <property type="term" value="F:ubiquinol-cytochrome-c reductase activity"/>
    <property type="evidence" value="ECO:0007669"/>
    <property type="project" value="InterPro"/>
</dbReference>
<dbReference type="GO" id="GO:0006122">
    <property type="term" value="P:mitochondrial electron transport, ubiquinol to cytochrome c"/>
    <property type="evidence" value="ECO:0007669"/>
    <property type="project" value="TreeGrafter"/>
</dbReference>
<dbReference type="CDD" id="cd00290">
    <property type="entry name" value="cytochrome_b_C"/>
    <property type="match status" value="1"/>
</dbReference>
<dbReference type="CDD" id="cd00284">
    <property type="entry name" value="Cytochrome_b_N"/>
    <property type="match status" value="1"/>
</dbReference>
<dbReference type="FunFam" id="1.20.810.10:FF:000002">
    <property type="entry name" value="Cytochrome b"/>
    <property type="match status" value="1"/>
</dbReference>
<dbReference type="Gene3D" id="1.20.810.10">
    <property type="entry name" value="Cytochrome Bc1 Complex, Chain C"/>
    <property type="match status" value="1"/>
</dbReference>
<dbReference type="InterPro" id="IPR005798">
    <property type="entry name" value="Cyt_b/b6_C"/>
</dbReference>
<dbReference type="InterPro" id="IPR036150">
    <property type="entry name" value="Cyt_b/b6_C_sf"/>
</dbReference>
<dbReference type="InterPro" id="IPR005797">
    <property type="entry name" value="Cyt_b/b6_N"/>
</dbReference>
<dbReference type="InterPro" id="IPR027387">
    <property type="entry name" value="Cytb/b6-like_sf"/>
</dbReference>
<dbReference type="InterPro" id="IPR030689">
    <property type="entry name" value="Cytochrome_b"/>
</dbReference>
<dbReference type="InterPro" id="IPR048260">
    <property type="entry name" value="Cytochrome_b_C_euk/bac"/>
</dbReference>
<dbReference type="InterPro" id="IPR048259">
    <property type="entry name" value="Cytochrome_b_N_euk/bac"/>
</dbReference>
<dbReference type="InterPro" id="IPR016174">
    <property type="entry name" value="Di-haem_cyt_TM"/>
</dbReference>
<dbReference type="PANTHER" id="PTHR19271">
    <property type="entry name" value="CYTOCHROME B"/>
    <property type="match status" value="1"/>
</dbReference>
<dbReference type="PANTHER" id="PTHR19271:SF16">
    <property type="entry name" value="CYTOCHROME B"/>
    <property type="match status" value="1"/>
</dbReference>
<dbReference type="Pfam" id="PF00032">
    <property type="entry name" value="Cytochrom_B_C"/>
    <property type="match status" value="1"/>
</dbReference>
<dbReference type="Pfam" id="PF00033">
    <property type="entry name" value="Cytochrome_B"/>
    <property type="match status" value="1"/>
</dbReference>
<dbReference type="PIRSF" id="PIRSF038885">
    <property type="entry name" value="COB"/>
    <property type="match status" value="1"/>
</dbReference>
<dbReference type="SUPFAM" id="SSF81648">
    <property type="entry name" value="a domain/subunit of cytochrome bc1 complex (Ubiquinol-cytochrome c reductase)"/>
    <property type="match status" value="1"/>
</dbReference>
<dbReference type="SUPFAM" id="SSF81342">
    <property type="entry name" value="Transmembrane di-heme cytochromes"/>
    <property type="match status" value="1"/>
</dbReference>
<dbReference type="PROSITE" id="PS51003">
    <property type="entry name" value="CYTB_CTER"/>
    <property type="match status" value="1"/>
</dbReference>
<dbReference type="PROSITE" id="PS51002">
    <property type="entry name" value="CYTB_NTER"/>
    <property type="match status" value="1"/>
</dbReference>
<feature type="chain" id="PRO_0000254724" description="Cytochrome b">
    <location>
        <begin position="1"/>
        <end position="379"/>
    </location>
</feature>
<feature type="transmembrane region" description="Helical" evidence="2">
    <location>
        <begin position="33"/>
        <end position="53"/>
    </location>
</feature>
<feature type="transmembrane region" description="Helical" evidence="2">
    <location>
        <begin position="77"/>
        <end position="98"/>
    </location>
</feature>
<feature type="transmembrane region" description="Helical" evidence="2">
    <location>
        <begin position="113"/>
        <end position="133"/>
    </location>
</feature>
<feature type="transmembrane region" description="Helical" evidence="2">
    <location>
        <begin position="178"/>
        <end position="198"/>
    </location>
</feature>
<feature type="transmembrane region" description="Helical" evidence="2">
    <location>
        <begin position="226"/>
        <end position="246"/>
    </location>
</feature>
<feature type="transmembrane region" description="Helical" evidence="2">
    <location>
        <begin position="288"/>
        <end position="308"/>
    </location>
</feature>
<feature type="transmembrane region" description="Helical" evidence="2">
    <location>
        <begin position="320"/>
        <end position="340"/>
    </location>
</feature>
<feature type="transmembrane region" description="Helical" evidence="2">
    <location>
        <begin position="347"/>
        <end position="367"/>
    </location>
</feature>
<feature type="binding site" description="axial binding residue" evidence="2">
    <location>
        <position position="83"/>
    </location>
    <ligand>
        <name>heme b</name>
        <dbReference type="ChEBI" id="CHEBI:60344"/>
        <label>b562</label>
    </ligand>
    <ligandPart>
        <name>Fe</name>
        <dbReference type="ChEBI" id="CHEBI:18248"/>
    </ligandPart>
</feature>
<feature type="binding site" description="axial binding residue" evidence="2">
    <location>
        <position position="97"/>
    </location>
    <ligand>
        <name>heme b</name>
        <dbReference type="ChEBI" id="CHEBI:60344"/>
        <label>b566</label>
    </ligand>
    <ligandPart>
        <name>Fe</name>
        <dbReference type="ChEBI" id="CHEBI:18248"/>
    </ligandPart>
</feature>
<feature type="binding site" description="axial binding residue" evidence="2">
    <location>
        <position position="182"/>
    </location>
    <ligand>
        <name>heme b</name>
        <dbReference type="ChEBI" id="CHEBI:60344"/>
        <label>b562</label>
    </ligand>
    <ligandPart>
        <name>Fe</name>
        <dbReference type="ChEBI" id="CHEBI:18248"/>
    </ligandPart>
</feature>
<feature type="binding site" description="axial binding residue" evidence="2">
    <location>
        <position position="196"/>
    </location>
    <ligand>
        <name>heme b</name>
        <dbReference type="ChEBI" id="CHEBI:60344"/>
        <label>b566</label>
    </ligand>
    <ligandPart>
        <name>Fe</name>
        <dbReference type="ChEBI" id="CHEBI:18248"/>
    </ligandPart>
</feature>
<feature type="binding site" evidence="2">
    <location>
        <position position="201"/>
    </location>
    <ligand>
        <name>a ubiquinone</name>
        <dbReference type="ChEBI" id="CHEBI:16389"/>
    </ligand>
</feature>
<comment type="function">
    <text evidence="2">Component of the ubiquinol-cytochrome c reductase complex (complex III or cytochrome b-c1 complex) that is part of the mitochondrial respiratory chain. The b-c1 complex mediates electron transfer from ubiquinol to cytochrome c. Contributes to the generation of a proton gradient across the mitochondrial membrane that is then used for ATP synthesis.</text>
</comment>
<comment type="cofactor">
    <cofactor evidence="2">
        <name>heme b</name>
        <dbReference type="ChEBI" id="CHEBI:60344"/>
    </cofactor>
    <text evidence="2">Binds 2 heme b groups non-covalently.</text>
</comment>
<comment type="subunit">
    <text evidence="2">The cytochrome bc1 complex contains 11 subunits: 3 respiratory subunits (MT-CYB, CYC1 and UQCRFS1), 2 core proteins (UQCRC1 and UQCRC2) and 6 low-molecular weight proteins (UQCRH/QCR6, UQCRB/QCR7, UQCRQ/QCR8, UQCR10/QCR9, UQCR11/QCR10 and a cleavage product of UQCRFS1). This cytochrome bc1 complex then forms a dimer.</text>
</comment>
<comment type="subcellular location">
    <subcellularLocation>
        <location evidence="2">Mitochondrion inner membrane</location>
        <topology evidence="2">Multi-pass membrane protein</topology>
    </subcellularLocation>
</comment>
<comment type="miscellaneous">
    <text evidence="1">Heme 1 (or BL or b562) is low-potential and absorbs at about 562 nm, and heme 2 (or BH or b566) is high-potential and absorbs at about 566 nm.</text>
</comment>
<comment type="similarity">
    <text evidence="3 4">Belongs to the cytochrome b family.</text>
</comment>
<comment type="caution">
    <text evidence="2">The full-length protein contains only eight transmembrane helices, not nine as predicted by bioinformatics tools.</text>
</comment>
<organism>
    <name type="scientific">Myotis evotis</name>
    <name type="common">Long-eared myotis</name>
    <name type="synonym">Vespertilio evotis</name>
    <dbReference type="NCBI Taxonomy" id="257883"/>
    <lineage>
        <taxon>Eukaryota</taxon>
        <taxon>Metazoa</taxon>
        <taxon>Chordata</taxon>
        <taxon>Craniata</taxon>
        <taxon>Vertebrata</taxon>
        <taxon>Euteleostomi</taxon>
        <taxon>Mammalia</taxon>
        <taxon>Eutheria</taxon>
        <taxon>Laurasiatheria</taxon>
        <taxon>Chiroptera</taxon>
        <taxon>Yangochiroptera</taxon>
        <taxon>Vespertilionidae</taxon>
        <taxon>Myotis</taxon>
    </lineage>
</organism>
<evidence type="ECO:0000250" key="1"/>
<evidence type="ECO:0000250" key="2">
    <source>
        <dbReference type="UniProtKB" id="P00157"/>
    </source>
</evidence>
<evidence type="ECO:0000255" key="3">
    <source>
        <dbReference type="PROSITE-ProRule" id="PRU00967"/>
    </source>
</evidence>
<evidence type="ECO:0000255" key="4">
    <source>
        <dbReference type="PROSITE-ProRule" id="PRU00968"/>
    </source>
</evidence>
<reference key="1">
    <citation type="journal article" date="2004" name="Acta Chiropt.">
        <title>Phylogeny of African myotis bats (Chiroptera, Vespertilionidae) inferred from cytochrome b sequences.</title>
        <authorList>
            <person name="Stadelmann B."/>
            <person name="Jacobs D.S."/>
            <person name="Schoeman C."/>
            <person name="Ruedi M."/>
        </authorList>
    </citation>
    <scope>NUCLEOTIDE SEQUENCE [GENOMIC DNA]</scope>
    <source>
        <tissue>Wing</tissue>
    </source>
</reference>